<reference key="1">
    <citation type="journal article" date="2005" name="Nature">
        <title>The map-based sequence of the rice genome.</title>
        <authorList>
            <consortium name="International rice genome sequencing project (IRGSP)"/>
        </authorList>
    </citation>
    <scope>NUCLEOTIDE SEQUENCE [LARGE SCALE GENOMIC DNA]</scope>
    <source>
        <strain>cv. Nipponbare</strain>
    </source>
</reference>
<reference key="2">
    <citation type="journal article" date="2008" name="Nucleic Acids Res.">
        <title>The rice annotation project database (RAP-DB): 2008 update.</title>
        <authorList>
            <consortium name="The rice annotation project (RAP)"/>
        </authorList>
    </citation>
    <scope>GENOME REANNOTATION</scope>
    <source>
        <strain>cv. Nipponbare</strain>
    </source>
</reference>
<reference key="3">
    <citation type="journal article" date="2013" name="Rice">
        <title>Improvement of the Oryza sativa Nipponbare reference genome using next generation sequence and optical map data.</title>
        <authorList>
            <person name="Kawahara Y."/>
            <person name="de la Bastide M."/>
            <person name="Hamilton J.P."/>
            <person name="Kanamori H."/>
            <person name="McCombie W.R."/>
            <person name="Ouyang S."/>
            <person name="Schwartz D.C."/>
            <person name="Tanaka T."/>
            <person name="Wu J."/>
            <person name="Zhou S."/>
            <person name="Childs K.L."/>
            <person name="Davidson R.M."/>
            <person name="Lin H."/>
            <person name="Quesada-Ocampo L."/>
            <person name="Vaillancourt B."/>
            <person name="Sakai H."/>
            <person name="Lee S.S."/>
            <person name="Kim J."/>
            <person name="Numa H."/>
            <person name="Itoh T."/>
            <person name="Buell C.R."/>
            <person name="Matsumoto T."/>
        </authorList>
    </citation>
    <scope>GENOME REANNOTATION</scope>
    <source>
        <strain>cv. Nipponbare</strain>
    </source>
</reference>
<reference key="4">
    <citation type="journal article" date="2003" name="Science">
        <title>Collection, mapping, and annotation of over 28,000 cDNA clones from japonica rice.</title>
        <authorList>
            <consortium name="The rice full-length cDNA consortium"/>
        </authorList>
    </citation>
    <scope>NUCLEOTIDE SEQUENCE [LARGE SCALE MRNA] (ISOFORM 2)</scope>
    <source>
        <strain>cv. Nipponbare</strain>
    </source>
</reference>
<name>GUN16_ORYSJ</name>
<accession>Q654U4</accession>
<accession>Q0DD73</accession>
<sequence>MRWRRVGDVVAVALLLGAAAAAAAAAARHDYEEALRKSLLYFEAQRSGRLPHGQRVAWRDHSGLTDGLEQGVDLVGGYYDAGDHVKFGLPMAFTVTMLSWSLLEYGADVAAAGELAHALDAIKWGTDYFIKAHTKPHELWAEVGDGDTDHYCWQRPEDMTTSRQAYKVDRRRPGSDVAGETAAAMAAASIVFRQSNPHYSHLLLHHAQQLFEFADTYRGKYDSSIAEVKSYYASVSGYHDELLWAALWLHRATGRAAYLDYAVDNADEFGGTGWAITEFSWDVKYAGVQILAARLLMRGEHEERHRGTLERYREKAEHYVCACMGRNAAGGADANVERSPGGMLYVRQWNNMQYVTNAAFLLSAYSDYLAGAGDGDGDGGGGVATCVGGGGAGAGEVFAAAREQVDYVLGSNPRGMSYLVGYGERFPARVHHRAASIVPYKDSKEFIGCAQGFDDWFGRRGANPNVVVGAIVGGPDRRDRFRDDRENYMQTEACTYNTAPMVGMFAMLNRLSRQESPSTTTTTTATTSSPEMGLSVNR</sequence>
<organism>
    <name type="scientific">Oryza sativa subsp. japonica</name>
    <name type="common">Rice</name>
    <dbReference type="NCBI Taxonomy" id="39947"/>
    <lineage>
        <taxon>Eukaryota</taxon>
        <taxon>Viridiplantae</taxon>
        <taxon>Streptophyta</taxon>
        <taxon>Embryophyta</taxon>
        <taxon>Tracheophyta</taxon>
        <taxon>Spermatophyta</taxon>
        <taxon>Magnoliopsida</taxon>
        <taxon>Liliopsida</taxon>
        <taxon>Poales</taxon>
        <taxon>Poaceae</taxon>
        <taxon>BOP clade</taxon>
        <taxon>Oryzoideae</taxon>
        <taxon>Oryzeae</taxon>
        <taxon>Oryzinae</taxon>
        <taxon>Oryza</taxon>
        <taxon>Oryza sativa</taxon>
    </lineage>
</organism>
<feature type="signal peptide" evidence="2">
    <location>
        <begin position="1"/>
        <end position="26"/>
    </location>
</feature>
<feature type="chain" id="PRO_0000249293" description="Endoglucanase 16">
    <location>
        <begin position="27"/>
        <end position="538"/>
    </location>
</feature>
<feature type="region of interest" description="Disordered" evidence="5">
    <location>
        <begin position="513"/>
        <end position="538"/>
    </location>
</feature>
<feature type="compositionally biased region" description="Low complexity" evidence="5">
    <location>
        <begin position="516"/>
        <end position="530"/>
    </location>
</feature>
<feature type="active site" description="Nucleophile" evidence="4">
    <location>
        <position position="83"/>
    </location>
</feature>
<feature type="active site" evidence="3">
    <location>
        <position position="431"/>
    </location>
</feature>
<feature type="active site" evidence="3">
    <location>
        <position position="483"/>
    </location>
</feature>
<feature type="active site" evidence="3">
    <location>
        <position position="492"/>
    </location>
</feature>
<feature type="splice variant" id="VSP_020389" description="In isoform 2." evidence="6">
    <location>
        <begin position="1"/>
        <end position="158"/>
    </location>
</feature>
<dbReference type="EC" id="3.2.1.4"/>
<dbReference type="EMBL" id="AP004027">
    <property type="protein sequence ID" value="BAD45673.1"/>
    <property type="status" value="ALT_SEQ"/>
    <property type="molecule type" value="Genomic_DNA"/>
</dbReference>
<dbReference type="EMBL" id="AP008212">
    <property type="protein sequence ID" value="BAF19200.1"/>
    <property type="status" value="ALT_SEQ"/>
    <property type="molecule type" value="Genomic_DNA"/>
</dbReference>
<dbReference type="EMBL" id="AP014962">
    <property type="status" value="NOT_ANNOTATED_CDS"/>
    <property type="molecule type" value="Genomic_DNA"/>
</dbReference>
<dbReference type="EMBL" id="AK065325">
    <property type="status" value="NOT_ANNOTATED_CDS"/>
    <property type="molecule type" value="mRNA"/>
</dbReference>
<dbReference type="RefSeq" id="XP_015641192.1">
    <property type="nucleotide sequence ID" value="XM_015785706.1"/>
</dbReference>
<dbReference type="SMR" id="Q654U4"/>
<dbReference type="FunCoup" id="Q654U4">
    <property type="interactions" value="19"/>
</dbReference>
<dbReference type="STRING" id="39947.Q654U4"/>
<dbReference type="CAZy" id="GH9">
    <property type="family name" value="Glycoside Hydrolase Family 9"/>
</dbReference>
<dbReference type="PaxDb" id="39947-Q654U4"/>
<dbReference type="KEGG" id="dosa:Os06g0247900"/>
<dbReference type="eggNOG" id="ENOG502QRF6">
    <property type="taxonomic scope" value="Eukaryota"/>
</dbReference>
<dbReference type="HOGENOM" id="CLU_008926_1_0_1"/>
<dbReference type="InParanoid" id="Q654U4"/>
<dbReference type="OrthoDB" id="10257085at2759"/>
<dbReference type="Proteomes" id="UP000000763">
    <property type="component" value="Chromosome 6"/>
</dbReference>
<dbReference type="Proteomes" id="UP000059680">
    <property type="component" value="Chromosome 6"/>
</dbReference>
<dbReference type="GO" id="GO:0005576">
    <property type="term" value="C:extracellular region"/>
    <property type="evidence" value="ECO:0007669"/>
    <property type="project" value="UniProtKB-SubCell"/>
</dbReference>
<dbReference type="GO" id="GO:0008810">
    <property type="term" value="F:cellulase activity"/>
    <property type="evidence" value="ECO:0007669"/>
    <property type="project" value="UniProtKB-EC"/>
</dbReference>
<dbReference type="GO" id="GO:0071555">
    <property type="term" value="P:cell wall organization"/>
    <property type="evidence" value="ECO:0007669"/>
    <property type="project" value="UniProtKB-KW"/>
</dbReference>
<dbReference type="GO" id="GO:0030245">
    <property type="term" value="P:cellulose catabolic process"/>
    <property type="evidence" value="ECO:0007669"/>
    <property type="project" value="UniProtKB-KW"/>
</dbReference>
<dbReference type="FunFam" id="1.50.10.10:FF:000020">
    <property type="entry name" value="Endoglucanase"/>
    <property type="match status" value="1"/>
</dbReference>
<dbReference type="Gene3D" id="1.50.10.10">
    <property type="match status" value="1"/>
</dbReference>
<dbReference type="InterPro" id="IPR008928">
    <property type="entry name" value="6-hairpin_glycosidase_sf"/>
</dbReference>
<dbReference type="InterPro" id="IPR012341">
    <property type="entry name" value="6hp_glycosidase-like_sf"/>
</dbReference>
<dbReference type="InterPro" id="IPR001701">
    <property type="entry name" value="Glyco_hydro_9"/>
</dbReference>
<dbReference type="InterPro" id="IPR018221">
    <property type="entry name" value="Glyco_hydro_9_His_AS"/>
</dbReference>
<dbReference type="PANTHER" id="PTHR22298">
    <property type="entry name" value="ENDO-1,4-BETA-GLUCANASE"/>
    <property type="match status" value="1"/>
</dbReference>
<dbReference type="Pfam" id="PF00759">
    <property type="entry name" value="Glyco_hydro_9"/>
    <property type="match status" value="1"/>
</dbReference>
<dbReference type="SUPFAM" id="SSF48208">
    <property type="entry name" value="Six-hairpin glycosidases"/>
    <property type="match status" value="1"/>
</dbReference>
<dbReference type="PROSITE" id="PS60032">
    <property type="entry name" value="GH9_1"/>
    <property type="match status" value="1"/>
</dbReference>
<dbReference type="PROSITE" id="PS00592">
    <property type="entry name" value="GH9_2"/>
    <property type="match status" value="1"/>
</dbReference>
<proteinExistence type="evidence at transcript level"/>
<comment type="catalytic activity">
    <reaction>
        <text>Endohydrolysis of (1-&gt;4)-beta-D-glucosidic linkages in cellulose, lichenin and cereal beta-D-glucans.</text>
        <dbReference type="EC" id="3.2.1.4"/>
    </reaction>
</comment>
<comment type="subcellular location">
    <subcellularLocation>
        <location evidence="1">Secreted</location>
    </subcellularLocation>
</comment>
<comment type="alternative products">
    <event type="alternative splicing"/>
    <isoform>
        <id>Q654U4-1</id>
        <name>1</name>
        <sequence type="displayed"/>
    </isoform>
    <isoform>
        <id>Q654U4-2</id>
        <name>2</name>
        <sequence type="described" ref="VSP_020389"/>
    </isoform>
</comment>
<comment type="similarity">
    <text evidence="4 7">Belongs to the glycosyl hydrolase 9 (cellulase E) family.</text>
</comment>
<comment type="sequence caution" evidence="7">
    <conflict type="erroneous gene model prediction">
        <sequence resource="EMBL-CDS" id="BAD45673"/>
    </conflict>
</comment>
<comment type="sequence caution" evidence="7">
    <conflict type="erroneous gene model prediction">
        <sequence resource="EMBL-CDS" id="BAF19200"/>
    </conflict>
</comment>
<protein>
    <recommendedName>
        <fullName>Endoglucanase 16</fullName>
        <ecNumber>3.2.1.4</ecNumber>
    </recommendedName>
    <alternativeName>
        <fullName>Endo-1,4-beta glucanase 16</fullName>
    </alternativeName>
</protein>
<keyword id="KW-0025">Alternative splicing</keyword>
<keyword id="KW-0119">Carbohydrate metabolism</keyword>
<keyword id="KW-0961">Cell wall biogenesis/degradation</keyword>
<keyword id="KW-0136">Cellulose degradation</keyword>
<keyword id="KW-0326">Glycosidase</keyword>
<keyword id="KW-0378">Hydrolase</keyword>
<keyword id="KW-0624">Polysaccharide degradation</keyword>
<keyword id="KW-1185">Reference proteome</keyword>
<keyword id="KW-0964">Secreted</keyword>
<keyword id="KW-0732">Signal</keyword>
<evidence type="ECO:0000250" key="1"/>
<evidence type="ECO:0000255" key="2"/>
<evidence type="ECO:0000255" key="3">
    <source>
        <dbReference type="PROSITE-ProRule" id="PRU10059"/>
    </source>
</evidence>
<evidence type="ECO:0000255" key="4">
    <source>
        <dbReference type="PROSITE-ProRule" id="PRU10140"/>
    </source>
</evidence>
<evidence type="ECO:0000256" key="5">
    <source>
        <dbReference type="SAM" id="MobiDB-lite"/>
    </source>
</evidence>
<evidence type="ECO:0000303" key="6">
    <source>
    </source>
</evidence>
<evidence type="ECO:0000305" key="7"/>
<gene>
    <name type="ordered locus">Os06g0247900</name>
    <name type="ordered locus">LOC_Os06g13830</name>
    <name type="ORF">OJ1136_C11.27</name>
</gene>